<comment type="function">
    <text evidence="1">Probable transcription factor, which may be involved in spermatogenesis and oogenesis.</text>
</comment>
<comment type="subcellular location">
    <subcellularLocation>
        <location evidence="2">Nucleus</location>
    </subcellularLocation>
</comment>
<organism>
    <name type="scientific">Rattus norvegicus</name>
    <name type="common">Rat</name>
    <dbReference type="NCBI Taxonomy" id="10116"/>
    <lineage>
        <taxon>Eukaryota</taxon>
        <taxon>Metazoa</taxon>
        <taxon>Chordata</taxon>
        <taxon>Craniata</taxon>
        <taxon>Vertebrata</taxon>
        <taxon>Euteleostomi</taxon>
        <taxon>Mammalia</taxon>
        <taxon>Eutheria</taxon>
        <taxon>Euarchontoglires</taxon>
        <taxon>Glires</taxon>
        <taxon>Rodentia</taxon>
        <taxon>Myomorpha</taxon>
        <taxon>Muroidea</taxon>
        <taxon>Muridae</taxon>
        <taxon>Murinae</taxon>
        <taxon>Rattus</taxon>
    </lineage>
</organism>
<keyword id="KW-0217">Developmental protein</keyword>
<keyword id="KW-0221">Differentiation</keyword>
<keyword id="KW-0238">DNA-binding</keyword>
<keyword id="KW-0539">Nucleus</keyword>
<keyword id="KW-0896">Oogenesis</keyword>
<keyword id="KW-1185">Reference proteome</keyword>
<keyword id="KW-0744">Spermatogenesis</keyword>
<keyword id="KW-0804">Transcription</keyword>
<keyword id="KW-0805">Transcription regulation</keyword>
<dbReference type="EMBL" id="BC104697">
    <property type="protein sequence ID" value="AAI04698.1"/>
    <property type="molecule type" value="mRNA"/>
</dbReference>
<dbReference type="RefSeq" id="NP_001030133.1">
    <property type="nucleotide sequence ID" value="NM_001034961.1"/>
</dbReference>
<dbReference type="SMR" id="Q3MHT3"/>
<dbReference type="FunCoup" id="Q3MHT3">
    <property type="interactions" value="78"/>
</dbReference>
<dbReference type="STRING" id="10116.ENSRNOP00000049772"/>
<dbReference type="PhosphoSitePlus" id="Q3MHT3"/>
<dbReference type="PaxDb" id="10116-ENSRNOP00000049772"/>
<dbReference type="Ensembl" id="ENSRNOT00000044424.4">
    <property type="protein sequence ID" value="ENSRNOP00000049772.3"/>
    <property type="gene ID" value="ENSRNOG00000038091.3"/>
</dbReference>
<dbReference type="GeneID" id="619575"/>
<dbReference type="KEGG" id="rno:619575"/>
<dbReference type="UCSC" id="RGD:1589577">
    <property type="organism name" value="rat"/>
</dbReference>
<dbReference type="AGR" id="RGD:1589577"/>
<dbReference type="CTD" id="54937"/>
<dbReference type="RGD" id="1589577">
    <property type="gene designation" value="Sohlh2"/>
</dbReference>
<dbReference type="eggNOG" id="ENOG502S71C">
    <property type="taxonomic scope" value="Eukaryota"/>
</dbReference>
<dbReference type="GeneTree" id="ENSGT00390000016050"/>
<dbReference type="HOGENOM" id="CLU_056118_0_0_1"/>
<dbReference type="InParanoid" id="Q3MHT3"/>
<dbReference type="OrthoDB" id="9948648at2759"/>
<dbReference type="PhylomeDB" id="Q3MHT3"/>
<dbReference type="TreeFam" id="TF336841"/>
<dbReference type="PRO" id="PR:Q3MHT3"/>
<dbReference type="Proteomes" id="UP000002494">
    <property type="component" value="Chromosome 2"/>
</dbReference>
<dbReference type="Bgee" id="ENSRNOG00000038091">
    <property type="expression patterns" value="Expressed in testis"/>
</dbReference>
<dbReference type="GO" id="GO:0005634">
    <property type="term" value="C:nucleus"/>
    <property type="evidence" value="ECO:0000318"/>
    <property type="project" value="GO_Central"/>
</dbReference>
<dbReference type="GO" id="GO:0001228">
    <property type="term" value="F:DNA-binding transcription activator activity, RNA polymerase II-specific"/>
    <property type="evidence" value="ECO:0000266"/>
    <property type="project" value="RGD"/>
</dbReference>
<dbReference type="GO" id="GO:0000981">
    <property type="term" value="F:DNA-binding transcription factor activity, RNA polymerase II-specific"/>
    <property type="evidence" value="ECO:0000318"/>
    <property type="project" value="GO_Central"/>
</dbReference>
<dbReference type="GO" id="GO:0042802">
    <property type="term" value="F:identical protein binding"/>
    <property type="evidence" value="ECO:0000266"/>
    <property type="project" value="RGD"/>
</dbReference>
<dbReference type="GO" id="GO:0046982">
    <property type="term" value="F:protein heterodimerization activity"/>
    <property type="evidence" value="ECO:0000266"/>
    <property type="project" value="RGD"/>
</dbReference>
<dbReference type="GO" id="GO:0042803">
    <property type="term" value="F:protein homodimerization activity"/>
    <property type="evidence" value="ECO:0000266"/>
    <property type="project" value="RGD"/>
</dbReference>
<dbReference type="GO" id="GO:0000978">
    <property type="term" value="F:RNA polymerase II cis-regulatory region sequence-specific DNA binding"/>
    <property type="evidence" value="ECO:0000318"/>
    <property type="project" value="GO_Central"/>
</dbReference>
<dbReference type="GO" id="GO:0000977">
    <property type="term" value="F:RNA polymerase II transcription regulatory region sequence-specific DNA binding"/>
    <property type="evidence" value="ECO:0000266"/>
    <property type="project" value="RGD"/>
</dbReference>
<dbReference type="GO" id="GO:1990837">
    <property type="term" value="F:sequence-specific double-stranded DNA binding"/>
    <property type="evidence" value="ECO:0000266"/>
    <property type="project" value="RGD"/>
</dbReference>
<dbReference type="GO" id="GO:0030154">
    <property type="term" value="P:cell differentiation"/>
    <property type="evidence" value="ECO:0000266"/>
    <property type="project" value="RGD"/>
</dbReference>
<dbReference type="GO" id="GO:0009994">
    <property type="term" value="P:oocyte differentiation"/>
    <property type="evidence" value="ECO:0000266"/>
    <property type="project" value="RGD"/>
</dbReference>
<dbReference type="GO" id="GO:0045944">
    <property type="term" value="P:positive regulation of transcription by RNA polymerase II"/>
    <property type="evidence" value="ECO:0000266"/>
    <property type="project" value="RGD"/>
</dbReference>
<dbReference type="GO" id="GO:0001545">
    <property type="term" value="P:primary ovarian follicle growth"/>
    <property type="evidence" value="ECO:0000266"/>
    <property type="project" value="RGD"/>
</dbReference>
<dbReference type="GO" id="GO:0010468">
    <property type="term" value="P:regulation of gene expression"/>
    <property type="evidence" value="ECO:0000266"/>
    <property type="project" value="RGD"/>
</dbReference>
<dbReference type="GO" id="GO:0006357">
    <property type="term" value="P:regulation of transcription by RNA polymerase II"/>
    <property type="evidence" value="ECO:0000318"/>
    <property type="project" value="GO_Central"/>
</dbReference>
<dbReference type="GO" id="GO:0007283">
    <property type="term" value="P:spermatogenesis"/>
    <property type="evidence" value="ECO:0000266"/>
    <property type="project" value="RGD"/>
</dbReference>
<dbReference type="CDD" id="cd18908">
    <property type="entry name" value="bHLH_SOHLH1_2"/>
    <property type="match status" value="1"/>
</dbReference>
<dbReference type="FunFam" id="4.10.280.10:FF:000071">
    <property type="entry name" value="spermatogenesis- and oogenesis-specific basic helix-loop-helix-containing protein 2"/>
    <property type="match status" value="1"/>
</dbReference>
<dbReference type="Gene3D" id="4.10.280.10">
    <property type="entry name" value="Helix-loop-helix DNA-binding domain"/>
    <property type="match status" value="1"/>
</dbReference>
<dbReference type="InterPro" id="IPR011598">
    <property type="entry name" value="bHLH_dom"/>
</dbReference>
<dbReference type="InterPro" id="IPR036638">
    <property type="entry name" value="HLH_DNA-bd_sf"/>
</dbReference>
<dbReference type="InterPro" id="IPR039583">
    <property type="entry name" value="TCFL5/SOLH1/2"/>
</dbReference>
<dbReference type="PANTHER" id="PTHR15402:SF4">
    <property type="entry name" value="SPERMATOGENESIS- AND OOGENESIS-SPECIFIC BASIC HELIX-LOOP-HELIX-CONTAINING PROTEIN 1"/>
    <property type="match status" value="1"/>
</dbReference>
<dbReference type="PANTHER" id="PTHR15402">
    <property type="entry name" value="TRANSCRIPTION FACTOR-LIKE 5 PROTEIN"/>
    <property type="match status" value="1"/>
</dbReference>
<dbReference type="Pfam" id="PF00010">
    <property type="entry name" value="HLH"/>
    <property type="match status" value="1"/>
</dbReference>
<dbReference type="SMART" id="SM00353">
    <property type="entry name" value="HLH"/>
    <property type="match status" value="1"/>
</dbReference>
<dbReference type="SUPFAM" id="SSF47459">
    <property type="entry name" value="HLH, helix-loop-helix DNA-binding domain"/>
    <property type="match status" value="1"/>
</dbReference>
<dbReference type="PROSITE" id="PS50888">
    <property type="entry name" value="BHLH"/>
    <property type="match status" value="1"/>
</dbReference>
<proteinExistence type="evidence at transcript level"/>
<feature type="chain" id="PRO_0000315702" description="Spermatogenesis- and oogenesis-specific basic helix-loop-helix-containing protein 2">
    <location>
        <begin position="1"/>
        <end position="462"/>
    </location>
</feature>
<feature type="domain" description="bHLH" evidence="2">
    <location>
        <begin position="200"/>
        <end position="251"/>
    </location>
</feature>
<feature type="region of interest" description="Disordered" evidence="3">
    <location>
        <begin position="422"/>
        <end position="462"/>
    </location>
</feature>
<feature type="compositionally biased region" description="Polar residues" evidence="3">
    <location>
        <begin position="442"/>
        <end position="462"/>
    </location>
</feature>
<gene>
    <name type="primary">Sohlh2</name>
</gene>
<evidence type="ECO:0000250" key="1"/>
<evidence type="ECO:0000255" key="2">
    <source>
        <dbReference type="PROSITE-ProRule" id="PRU00981"/>
    </source>
</evidence>
<evidence type="ECO:0000256" key="3">
    <source>
        <dbReference type="SAM" id="MobiDB-lite"/>
    </source>
</evidence>
<reference key="1">
    <citation type="journal article" date="2004" name="Genome Res.">
        <title>The status, quality, and expansion of the NIH full-length cDNA project: the Mammalian Gene Collection (MGC).</title>
        <authorList>
            <consortium name="The MGC Project Team"/>
        </authorList>
    </citation>
    <scope>NUCLEOTIDE SEQUENCE [LARGE SCALE MRNA]</scope>
    <source>
        <tissue>Testis</tissue>
    </source>
</reference>
<name>SOLH2_RAT</name>
<accession>Q3MHT3</accession>
<protein>
    <recommendedName>
        <fullName>Spermatogenesis- and oogenesis-specific basic helix-loop-helix-containing protein 2</fullName>
    </recommendedName>
</protein>
<sequence length="462" mass="50669">MADRISTGELGRRPGQGRVDLLLVGDATRYFLAGSVQKFFSSTAQITLTISNVKKVAALLAANSFDIIFLKVTSTLTAEEQEAVRLIRSGKKKNTHLLFAFVIPEKLRGYISDYGADISFNEPLTLEKVNTVINYWKTYFTNTDMGNTELPPECRLYFQTSCSELGGHFPTDLFLCSELLNNDTGLGLKAPLSSPERNKKASFLHSSKEKLRRERIKFCCEQLRTLLPYVKGRKSDVASVIEATVDYVKQVRESLSPAIMAQITESLQSNKRFSKRQMPIELFLPCTATSQRGDAMLTSAFSPVQEIQLLADQGLNVYSMPAAGGPLEEAVRGQPGSVSEDLYKTRVPSTTLSLNSFHAVRYCSGPVSPHEAAARTNQNISIYLPPTGPSVSSFTPQHCNAMLCPTRPASSSCLCTSGHELPASSRTASSSIFRGFRESDSGHQASQQPTGPSLQPQDSSYF</sequence>